<protein>
    <recommendedName>
        <fullName>Putative 1-phosphatidylinositol-3-phosphate 5-kinase FAB1D</fullName>
        <shortName>Phosphatidylinositol 3-phosphate 5-kinase</shortName>
        <ecNumber>2.7.1.150</ecNumber>
    </recommendedName>
    <alternativeName>
        <fullName>Phosphatidylinositol 3-phosphate 5-kinase type III</fullName>
        <shortName>PIPkin-III</shortName>
        <shortName>Type III PIP kinase</shortName>
    </alternativeName>
    <alternativeName>
        <fullName>Protein FORMS APLOID AND BINUCLEATE CELLS 1D</fullName>
    </alternativeName>
</protein>
<comment type="function">
    <text evidence="1">The PI(3,5)P2 regulatory complex regulates both the synthesis and turnover of phosphatidylinositol 3,5-bisphosphate (PtdIns(3,5)P2). Catalyzes the phosphorylation of phosphatidylinositol 3-phosphate on the fifth hydroxyl of the myo-inositol ring, to form phosphatidylinositol 3,5-bisphosphate (By similarity).</text>
</comment>
<comment type="catalytic activity">
    <reaction>
        <text>a 1,2-diacyl-sn-glycero-3-phospho-(1D-myo-inositol-3-phosphate) + ATP = a 1,2-diacyl-sn-glycero-3-phospho-(1D-myo-inositol-3,5-bisphosphate) + ADP + H(+)</text>
        <dbReference type="Rhea" id="RHEA:13609"/>
        <dbReference type="ChEBI" id="CHEBI:15378"/>
        <dbReference type="ChEBI" id="CHEBI:30616"/>
        <dbReference type="ChEBI" id="CHEBI:57923"/>
        <dbReference type="ChEBI" id="CHEBI:58088"/>
        <dbReference type="ChEBI" id="CHEBI:456216"/>
        <dbReference type="EC" id="2.7.1.150"/>
    </reaction>
</comment>
<comment type="cofactor">
    <cofactor evidence="1">
        <name>Mg(2+)</name>
        <dbReference type="ChEBI" id="CHEBI:18420"/>
    </cofactor>
    <cofactor evidence="1">
        <name>Mn(2+)</name>
        <dbReference type="ChEBI" id="CHEBI:29035"/>
    </cofactor>
</comment>
<comment type="subunit">
    <text evidence="1">Component of the PI(3,5)P2 regulatory complex at least composed of ATG18, SAC/FIG4, FAB1 and VAC14.</text>
</comment>
<comment type="caution">
    <text evidence="4">Lacks the FYVE domain, necessary to efficiently target the protein to membranes containing the phosphatidylinositol-3P substrate. Therefore, its molecular function remains unknown.</text>
</comment>
<feature type="chain" id="PRO_0000421873" description="Putative 1-phosphatidylinositol-3-phosphate 5-kinase FAB1D">
    <location>
        <begin position="1"/>
        <end position="1456"/>
    </location>
</feature>
<feature type="domain" description="PIPK" evidence="2">
    <location>
        <begin position="1115"/>
        <end position="1443"/>
    </location>
</feature>
<feature type="region of interest" description="Disordered" evidence="3">
    <location>
        <begin position="1"/>
        <end position="110"/>
    </location>
</feature>
<feature type="region of interest" description="Disordered" evidence="3">
    <location>
        <begin position="533"/>
        <end position="592"/>
    </location>
</feature>
<feature type="region of interest" description="Disordered" evidence="3">
    <location>
        <begin position="925"/>
        <end position="944"/>
    </location>
</feature>
<feature type="region of interest" description="Disordered" evidence="3">
    <location>
        <begin position="967"/>
        <end position="987"/>
    </location>
</feature>
<feature type="region of interest" description="Disordered" evidence="3">
    <location>
        <begin position="1003"/>
        <end position="1022"/>
    </location>
</feature>
<feature type="region of interest" description="Disordered" evidence="3">
    <location>
        <begin position="1137"/>
        <end position="1159"/>
    </location>
</feature>
<feature type="compositionally biased region" description="Low complexity" evidence="3">
    <location>
        <begin position="1"/>
        <end position="19"/>
    </location>
</feature>
<feature type="compositionally biased region" description="Basic and acidic residues" evidence="3">
    <location>
        <begin position="43"/>
        <end position="57"/>
    </location>
</feature>
<feature type="compositionally biased region" description="Acidic residues" evidence="3">
    <location>
        <begin position="86"/>
        <end position="110"/>
    </location>
</feature>
<feature type="compositionally biased region" description="Low complexity" evidence="3">
    <location>
        <begin position="533"/>
        <end position="544"/>
    </location>
</feature>
<feature type="compositionally biased region" description="Polar residues" evidence="3">
    <location>
        <begin position="973"/>
        <end position="987"/>
    </location>
</feature>
<feature type="compositionally biased region" description="Polar residues" evidence="3">
    <location>
        <begin position="1150"/>
        <end position="1159"/>
    </location>
</feature>
<reference key="1">
    <citation type="journal article" date="2000" name="Nature">
        <title>Sequence and analysis of chromosome 1 of the plant Arabidopsis thaliana.</title>
        <authorList>
            <person name="Theologis A."/>
            <person name="Ecker J.R."/>
            <person name="Palm C.J."/>
            <person name="Federspiel N.A."/>
            <person name="Kaul S."/>
            <person name="White O."/>
            <person name="Alonso J."/>
            <person name="Altafi H."/>
            <person name="Araujo R."/>
            <person name="Bowman C.L."/>
            <person name="Brooks S.Y."/>
            <person name="Buehler E."/>
            <person name="Chan A."/>
            <person name="Chao Q."/>
            <person name="Chen H."/>
            <person name="Cheuk R.F."/>
            <person name="Chin C.W."/>
            <person name="Chung M.K."/>
            <person name="Conn L."/>
            <person name="Conway A.B."/>
            <person name="Conway A.R."/>
            <person name="Creasy T.H."/>
            <person name="Dewar K."/>
            <person name="Dunn P."/>
            <person name="Etgu P."/>
            <person name="Feldblyum T.V."/>
            <person name="Feng J.-D."/>
            <person name="Fong B."/>
            <person name="Fujii C.Y."/>
            <person name="Gill J.E."/>
            <person name="Goldsmith A.D."/>
            <person name="Haas B."/>
            <person name="Hansen N.F."/>
            <person name="Hughes B."/>
            <person name="Huizar L."/>
            <person name="Hunter J.L."/>
            <person name="Jenkins J."/>
            <person name="Johnson-Hopson C."/>
            <person name="Khan S."/>
            <person name="Khaykin E."/>
            <person name="Kim C.J."/>
            <person name="Koo H.L."/>
            <person name="Kremenetskaia I."/>
            <person name="Kurtz D.B."/>
            <person name="Kwan A."/>
            <person name="Lam B."/>
            <person name="Langin-Hooper S."/>
            <person name="Lee A."/>
            <person name="Lee J.M."/>
            <person name="Lenz C.A."/>
            <person name="Li J.H."/>
            <person name="Li Y.-P."/>
            <person name="Lin X."/>
            <person name="Liu S.X."/>
            <person name="Liu Z.A."/>
            <person name="Luros J.S."/>
            <person name="Maiti R."/>
            <person name="Marziali A."/>
            <person name="Militscher J."/>
            <person name="Miranda M."/>
            <person name="Nguyen M."/>
            <person name="Nierman W.C."/>
            <person name="Osborne B.I."/>
            <person name="Pai G."/>
            <person name="Peterson J."/>
            <person name="Pham P.K."/>
            <person name="Rizzo M."/>
            <person name="Rooney T."/>
            <person name="Rowley D."/>
            <person name="Sakano H."/>
            <person name="Salzberg S.L."/>
            <person name="Schwartz J.R."/>
            <person name="Shinn P."/>
            <person name="Southwick A.M."/>
            <person name="Sun H."/>
            <person name="Tallon L.J."/>
            <person name="Tambunga G."/>
            <person name="Toriumi M.J."/>
            <person name="Town C.D."/>
            <person name="Utterback T."/>
            <person name="Van Aken S."/>
            <person name="Vaysberg M."/>
            <person name="Vysotskaia V.S."/>
            <person name="Walker M."/>
            <person name="Wu D."/>
            <person name="Yu G."/>
            <person name="Fraser C.M."/>
            <person name="Venter J.C."/>
            <person name="Davis R.W."/>
        </authorList>
    </citation>
    <scope>NUCLEOTIDE SEQUENCE [LARGE SCALE GENOMIC DNA]</scope>
    <source>
        <strain>cv. Columbia</strain>
    </source>
</reference>
<reference key="2">
    <citation type="journal article" date="2017" name="Plant J.">
        <title>Araport11: a complete reannotation of the Arabidopsis thaliana reference genome.</title>
        <authorList>
            <person name="Cheng C.Y."/>
            <person name="Krishnakumar V."/>
            <person name="Chan A.P."/>
            <person name="Thibaud-Nissen F."/>
            <person name="Schobel S."/>
            <person name="Town C.D."/>
        </authorList>
    </citation>
    <scope>GENOME REANNOTATION</scope>
    <source>
        <strain>cv. Columbia</strain>
    </source>
</reference>
<reference key="3">
    <citation type="journal article" date="2002" name="Plant Physiol.">
        <title>Inositol phospholipid metabolism in Arabidopsis. Characterized and putative isoforms of inositol phospholipid kinase and phosphoinositide-specific phospholipase C.</title>
        <authorList>
            <person name="Mueller-Roeber B."/>
            <person name="Pical C."/>
        </authorList>
    </citation>
    <scope>GENE FAMILY</scope>
    <scope>REVIEW</scope>
</reference>
<accession>Q9XID0</accession>
<gene>
    <name type="primary">FAB1D</name>
    <name type="ordered locus">At1g34260</name>
    <name type="ORF">F23M19.8</name>
</gene>
<dbReference type="EC" id="2.7.1.150"/>
<dbReference type="EMBL" id="AC007454">
    <property type="protein sequence ID" value="AAD39608.1"/>
    <property type="molecule type" value="Genomic_DNA"/>
</dbReference>
<dbReference type="EMBL" id="CP002684">
    <property type="protein sequence ID" value="AEE31690.1"/>
    <property type="molecule type" value="Genomic_DNA"/>
</dbReference>
<dbReference type="EMBL" id="CP002684">
    <property type="protein sequence ID" value="ANM59572.1"/>
    <property type="molecule type" value="Genomic_DNA"/>
</dbReference>
<dbReference type="EMBL" id="CP002684">
    <property type="protein sequence ID" value="ANM59574.1"/>
    <property type="molecule type" value="Genomic_DNA"/>
</dbReference>
<dbReference type="PIR" id="G86466">
    <property type="entry name" value="G86466"/>
</dbReference>
<dbReference type="RefSeq" id="NP_001319143.1">
    <property type="nucleotide sequence ID" value="NM_001333092.1"/>
</dbReference>
<dbReference type="RefSeq" id="NP_001321920.1">
    <property type="nucleotide sequence ID" value="NM_001333093.1"/>
</dbReference>
<dbReference type="RefSeq" id="NP_174686.1">
    <property type="nucleotide sequence ID" value="NM_103148.4"/>
</dbReference>
<dbReference type="SMR" id="Q9XID0"/>
<dbReference type="FunCoup" id="Q9XID0">
    <property type="interactions" value="3565"/>
</dbReference>
<dbReference type="STRING" id="3702.Q9XID0"/>
<dbReference type="iPTMnet" id="Q9XID0"/>
<dbReference type="PaxDb" id="3702-AT1G34260.1"/>
<dbReference type="ProteomicsDB" id="222361"/>
<dbReference type="EnsemblPlants" id="AT1G34260.1">
    <property type="protein sequence ID" value="AT1G34260.1"/>
    <property type="gene ID" value="AT1G34260"/>
</dbReference>
<dbReference type="EnsemblPlants" id="AT1G34260.2">
    <property type="protein sequence ID" value="AT1G34260.2"/>
    <property type="gene ID" value="AT1G34260"/>
</dbReference>
<dbReference type="EnsemblPlants" id="AT1G34260.3">
    <property type="protein sequence ID" value="AT1G34260.3"/>
    <property type="gene ID" value="AT1G34260"/>
</dbReference>
<dbReference type="GeneID" id="840326"/>
<dbReference type="Gramene" id="AT1G34260.1">
    <property type="protein sequence ID" value="AT1G34260.1"/>
    <property type="gene ID" value="AT1G34260"/>
</dbReference>
<dbReference type="Gramene" id="AT1G34260.2">
    <property type="protein sequence ID" value="AT1G34260.2"/>
    <property type="gene ID" value="AT1G34260"/>
</dbReference>
<dbReference type="Gramene" id="AT1G34260.3">
    <property type="protein sequence ID" value="AT1G34260.3"/>
    <property type="gene ID" value="AT1G34260"/>
</dbReference>
<dbReference type="KEGG" id="ath:AT1G34260"/>
<dbReference type="Araport" id="AT1G34260"/>
<dbReference type="TAIR" id="AT1G34260">
    <property type="gene designation" value="FAB1D"/>
</dbReference>
<dbReference type="eggNOG" id="KOG0230">
    <property type="taxonomic scope" value="Eukaryota"/>
</dbReference>
<dbReference type="HOGENOM" id="CLU_000480_4_0_1"/>
<dbReference type="InParanoid" id="Q9XID0"/>
<dbReference type="OMA" id="QCHAKRN"/>
<dbReference type="PhylomeDB" id="Q9XID0"/>
<dbReference type="BioCyc" id="ARA:AT1G34260-MONOMER"/>
<dbReference type="PRO" id="PR:Q9XID0"/>
<dbReference type="Proteomes" id="UP000006548">
    <property type="component" value="Chromosome 1"/>
</dbReference>
<dbReference type="ExpressionAtlas" id="Q9XID0">
    <property type="expression patterns" value="baseline and differential"/>
</dbReference>
<dbReference type="GO" id="GO:0000285">
    <property type="term" value="F:1-phosphatidylinositol-3-phosphate 5-kinase activity"/>
    <property type="evidence" value="ECO:0007669"/>
    <property type="project" value="UniProtKB-EC"/>
</dbReference>
<dbReference type="GO" id="GO:0005524">
    <property type="term" value="F:ATP binding"/>
    <property type="evidence" value="ECO:0007669"/>
    <property type="project" value="UniProtKB-KW"/>
</dbReference>
<dbReference type="GO" id="GO:0046488">
    <property type="term" value="P:phosphatidylinositol metabolic process"/>
    <property type="evidence" value="ECO:0007669"/>
    <property type="project" value="InterPro"/>
</dbReference>
<dbReference type="CDD" id="cd03334">
    <property type="entry name" value="Fab1_TCP"/>
    <property type="match status" value="1"/>
</dbReference>
<dbReference type="CDD" id="cd17300">
    <property type="entry name" value="PIPKc_PIKfyve"/>
    <property type="match status" value="1"/>
</dbReference>
<dbReference type="FunFam" id="3.30.810.10:FF:000001">
    <property type="entry name" value="1-phosphatidylinositol 3-phosphate 5-kinase FAB1"/>
    <property type="match status" value="1"/>
</dbReference>
<dbReference type="FunFam" id="3.50.7.10:FF:000007">
    <property type="entry name" value="1-phosphatidylinositol 3-phosphate 5-kinase isoform X1"/>
    <property type="match status" value="1"/>
</dbReference>
<dbReference type="FunFam" id="3.30.800.10:FF:000008">
    <property type="entry name" value="Putative 1-phosphatidylinositol-3-phosphate 5-kinase FAB1D"/>
    <property type="match status" value="1"/>
</dbReference>
<dbReference type="Gene3D" id="3.30.810.10">
    <property type="entry name" value="2-Layer Sandwich"/>
    <property type="match status" value="1"/>
</dbReference>
<dbReference type="Gene3D" id="3.50.7.10">
    <property type="entry name" value="GroEL"/>
    <property type="match status" value="1"/>
</dbReference>
<dbReference type="Gene3D" id="3.30.800.10">
    <property type="entry name" value="Phosphatidylinositol Phosphate Kinase II Beta"/>
    <property type="match status" value="1"/>
</dbReference>
<dbReference type="InterPro" id="IPR002423">
    <property type="entry name" value="Cpn60/GroEL/TCP-1"/>
</dbReference>
<dbReference type="InterPro" id="IPR027409">
    <property type="entry name" value="GroEL-like_apical_dom_sf"/>
</dbReference>
<dbReference type="InterPro" id="IPR044769">
    <property type="entry name" value="PIKfyve_PIPKc"/>
</dbReference>
<dbReference type="InterPro" id="IPR027483">
    <property type="entry name" value="PInositol-4-P-4/5-kinase_C_sf"/>
</dbReference>
<dbReference type="InterPro" id="IPR002498">
    <property type="entry name" value="PInositol-4-P-4/5-kinase_core"/>
</dbReference>
<dbReference type="InterPro" id="IPR027484">
    <property type="entry name" value="PInositol-4-P-5-kinase_N"/>
</dbReference>
<dbReference type="PANTHER" id="PTHR45748">
    <property type="entry name" value="1-PHOSPHATIDYLINOSITOL 3-PHOSPHATE 5-KINASE-RELATED"/>
    <property type="match status" value="1"/>
</dbReference>
<dbReference type="PANTHER" id="PTHR45748:SF4">
    <property type="entry name" value="1-PHOSPHATIDYLINOSITOL-3-PHOSPHATE 5-KINASE FAB1D-RELATED"/>
    <property type="match status" value="1"/>
</dbReference>
<dbReference type="Pfam" id="PF00118">
    <property type="entry name" value="Cpn60_TCP1"/>
    <property type="match status" value="1"/>
</dbReference>
<dbReference type="Pfam" id="PF01504">
    <property type="entry name" value="PIP5K"/>
    <property type="match status" value="1"/>
</dbReference>
<dbReference type="SMART" id="SM00330">
    <property type="entry name" value="PIPKc"/>
    <property type="match status" value="1"/>
</dbReference>
<dbReference type="SUPFAM" id="SSF52029">
    <property type="entry name" value="GroEL apical domain-like"/>
    <property type="match status" value="1"/>
</dbReference>
<dbReference type="SUPFAM" id="SSF56104">
    <property type="entry name" value="SAICAR synthase-like"/>
    <property type="match status" value="1"/>
</dbReference>
<dbReference type="PROSITE" id="PS51455">
    <property type="entry name" value="PIPK"/>
    <property type="match status" value="1"/>
</dbReference>
<organism>
    <name type="scientific">Arabidopsis thaliana</name>
    <name type="common">Mouse-ear cress</name>
    <dbReference type="NCBI Taxonomy" id="3702"/>
    <lineage>
        <taxon>Eukaryota</taxon>
        <taxon>Viridiplantae</taxon>
        <taxon>Streptophyta</taxon>
        <taxon>Embryophyta</taxon>
        <taxon>Tracheophyta</taxon>
        <taxon>Spermatophyta</taxon>
        <taxon>Magnoliopsida</taxon>
        <taxon>eudicotyledons</taxon>
        <taxon>Gunneridae</taxon>
        <taxon>Pentapetalae</taxon>
        <taxon>rosids</taxon>
        <taxon>malvids</taxon>
        <taxon>Brassicales</taxon>
        <taxon>Brassicaceae</taxon>
        <taxon>Camelineae</taxon>
        <taxon>Arabidopsis</taxon>
    </lineage>
</organism>
<proteinExistence type="inferred from homology"/>
<sequence>MTPSNSLSSSERSLSGECSVDGNSCDRGIEDECSSHSSQEDVELTKEVKVDRLERKSKSMPSDILDILDEKSKENSVENVQFLSDREDDSDDVPVWEPPEPENPEDEVDGVFADDDDDCCDGSKWNKASLLGELSDESSEKRKVYEENRRVMLEEADSKFKFIVSQLIKSAGFSIEESGYWFEIVARLCWEAASMLKPAIDGKSVDPTEYIKVKCIATGSCVDSEVFKGLVFKKHAALKHMATKYEHPRIMLVEGVLGHPISGFSSLQSVNQDNEYLLKYVKPVVDIIEASKPDVMLVEKSVSRDIQKTILDKGVTLVFDMKLHRLQRISRCIGSPILSVDSLSSQKLKHCDSFRIEKIVEEHNAAGESDKKPTKTLMFLEGCPTRLGCTILLKGCHSERLKKVKEVVQYSFILAYHLMLEASFLADRHTMFSTIFAKEATSCVVEIENFSPSPSPRESPSEAVDIPVSNGFDEQTIQINGEADGEKVGTWESDGDHVFSHEPYNPVIFTGFSSLSARLSKYLGFVQNPESVPVSVDTDVSTTSNLDSIRESEEDTAEKNEDKQPLLLDPELPVNSSSDDGDNKSQTENDIESTLESQSILVLVSKRNALRGIMCDQRHFSHIKFYKHFDVPLEKFLRDMFNQRNLCQTCVEFPEAHLYYYAHQNKQLTIQIKRIPVAKGLAGEAKGKIWMWSRCGKCKTKNASRKSTKRVLISTAARSLSFGKFLELSFSQQTFLNRSSSCGHSFDSDFLHFFGLGSMVAMLSYSQVASYTVSLPPMKLESSILIKAGWLEKEFQTVFTKGISLFEDAAGFLKRLRSQFTNSDLRYQRARKLLSNIEELLKHERCIFEENIKNSFDKAKTIDDVSHRLLRLNRMRWELLLQALIWNYRLQSLVLSDRLLPSSDETKIYEQGLKTVSEAGMTRYENDNKVSDSGSNGGIDTPLVEHKDIPIAGASVGDNDQMAESYVPEDNESQTLCSSSPDTTSPINNHFDTHLAVNVHSTNGQEADKSIPVTGESLDDEVSTSNGPHILGWDEWFWLPFEELRSKRIVDIEKEYLLKFEYVNNFTQENLQTVNQIITEESSRLRISLRDDDFIVSDYEDELSSLIACALAHLNNEESKKPLSRCIHGSLQGFLDNNQDSKQTDRDVSRFSSESTNRLETLPPPEVLVTFGSVKSVGKPKYSIVSLYADDFRDLRKRCCSSELDYIASLSRCKPWDAKGGKSKSVFAKTLDDRFIVKEIKKTEYESFVTFATEYFKYMKDSYDLGNQTCLAKVLGIHQVTVRQPKGGGKEIRHDLMVMENLSFSRKVTRQYDLKGALHARFTATSANGEDDVLLDQNFVNDMNKSPLYVSKTSKQNLQRAVYNDTSFLTSINVMDYSLLVGVDDENHELVCGIIDYLRQYTWDKQLETWVKSSLVVPKNVQPTVISPIDYKTRFRKFMKTHFLCVPDQWCDQGDS</sequence>
<evidence type="ECO:0000250" key="1"/>
<evidence type="ECO:0000255" key="2">
    <source>
        <dbReference type="PROSITE-ProRule" id="PRU00781"/>
    </source>
</evidence>
<evidence type="ECO:0000256" key="3">
    <source>
        <dbReference type="SAM" id="MobiDB-lite"/>
    </source>
</evidence>
<evidence type="ECO:0000305" key="4"/>
<name>FAB1D_ARATH</name>
<keyword id="KW-0067">ATP-binding</keyword>
<keyword id="KW-0418">Kinase</keyword>
<keyword id="KW-0547">Nucleotide-binding</keyword>
<keyword id="KW-1185">Reference proteome</keyword>
<keyword id="KW-0808">Transferase</keyword>